<reference key="1">
    <citation type="journal article" date="1990" name="Nucleic Acids Res.">
        <title>Complete cDNA sequence encoding rat high and low molecular weight MAP2.</title>
        <authorList>
            <person name="Kindler S."/>
            <person name="Schwanke B."/>
            <person name="Schulz B."/>
            <person name="Garner C.C."/>
        </authorList>
    </citation>
    <scope>NUCLEOTIDE SEQUENCE [MRNA] (ISOFORM 2)</scope>
    <source>
        <strain>Wistar</strain>
        <tissue>Brain</tissue>
    </source>
</reference>
<reference key="2">
    <citation type="journal article" date="1990" name="J. Biol. Chem.">
        <title>Molecular structure of microtubule-associated protein 2b and 2c from rat brain.</title>
        <authorList>
            <person name="Kindler S."/>
            <person name="Schulz B."/>
            <person name="Goedert M."/>
            <person name="Garner C.C."/>
        </authorList>
    </citation>
    <scope>NUCLEOTIDE SEQUENCE [MRNA] (ISOFORM 2)</scope>
    <scope>TISSUE SPECIFICITY (ISOFORM 2)</scope>
    <scope>DEVELOPMENTAL STAGE (ISOFORM 3)</scope>
    <source>
        <strain>Wistar</strain>
        <tissue>Brain</tissue>
    </source>
</reference>
<reference key="3">
    <citation type="journal article" date="1990" name="Nucleic Acids Res.">
        <title>Nucleotide and amino acid sequences of embryonic rat MAP2c.</title>
        <authorList>
            <person name="Doll T."/>
            <person name="Papandrikopoulou A."/>
            <person name="Matus A."/>
        </authorList>
    </citation>
    <scope>NUCLEOTIDE SEQUENCE [MRNA] (ISOFORM 3)</scope>
</reference>
<reference key="4">
    <citation type="journal article" date="1989" name="Nature">
        <title>Embryonic MAP2 lacks the cross-linking sidearm sequences and dendritic targeting signal of adult MAP2.</title>
        <authorList>
            <person name="Papandrikopoulou A."/>
            <person name="Doll T."/>
            <person name="Tucker R.P."/>
            <person name="Garner C.C."/>
            <person name="Matus A."/>
        </authorList>
    </citation>
    <scope>DISCUSSION OF SEQUENCE</scope>
    <scope>TISSUE SPECIFICITY (ISOFORM 3)</scope>
    <scope>DEVELOPMENTAL STAGE (ISOFORM 3)</scope>
</reference>
<reference key="5">
    <citation type="journal article" date="1993" name="J. Cell Sci.">
        <title>An isoform of microtubule-associated protein 2 (MAP2) containing four repeats of the tubulin-binding motif.</title>
        <authorList>
            <person name="Doll T."/>
            <person name="Meichsner M."/>
            <person name="Riederer B.M."/>
            <person name="Honegger P."/>
            <person name="Matus A."/>
        </authorList>
    </citation>
    <scope>NUCLEOTIDE SEQUENCE [MRNA] OF 1695-1725 (ISOFORM 1)</scope>
</reference>
<reference key="6">
    <citation type="journal article" date="1997" name="Cell">
        <title>MARK - a novel family of protein kinases that phosphorylate microtubule-associated proteins and trigger microtubule disruption.</title>
        <authorList>
            <person name="Drewes G."/>
            <person name="Ebneth A."/>
            <person name="Preuss U."/>
            <person name="Mandelkow E.-M."/>
            <person name="Mandelkow E."/>
        </authorList>
    </citation>
    <scope>PHOSPHORYLATION AT SER-1682</scope>
    <source>
        <strain>Sprague-Dawley</strain>
        <tissue>Brain</tissue>
    </source>
</reference>
<reference key="7">
    <citation type="journal article" date="2000" name="Mol. Biol. Cell">
        <title>Phosphorylation-dependent localization of microtubule-associated protein MAP2c to the actin cytoskeleton.</title>
        <authorList>
            <person name="Ozer R.S."/>
            <person name="Halpain S."/>
        </authorList>
    </citation>
    <scope>PHOSPHORYLATION AT SER-319; SER-350 AND SER-382 (ISOFORM 3)</scope>
</reference>
<reference key="8">
    <citation type="journal article" date="2012" name="Nat. Commun.">
        <title>Quantitative maps of protein phosphorylation sites across 14 different rat organs and tissues.</title>
        <authorList>
            <person name="Lundby A."/>
            <person name="Secher A."/>
            <person name="Lage K."/>
            <person name="Nordsborg N.B."/>
            <person name="Dmytriyev A."/>
            <person name="Lundby C."/>
            <person name="Olsen J.V."/>
        </authorList>
    </citation>
    <scope>PHOSPHORYLATION [LARGE SCALE ANALYSIS] AT SER-37; SER-136; SER-140; SER-221; SER-224; SER-348; SER-498; SER-522; SER-610; SER-628; SER-741; SER-884; SER-893; SER-939; SER-1051; SER-1140; SER-1141; THR-1161; SER-1162; SER-1353; THR-1359; SER-1541; THR-1611; THR-1622; THR-1625; THR-1652; SER-1656; SER-1816; SER-1824; SER-1829 AND SER-1842</scope>
    <scope>IDENTIFICATION BY MASS SPECTROMETRY [LARGE SCALE ANALYSIS]</scope>
</reference>
<reference key="9">
    <citation type="journal article" date="2018" name="J. Neurosci.">
        <title>Neuronal Preconditioning Requires the Mitophagic Activity of C-terminus of HSC70-Interacting Protein.</title>
        <authorList>
            <person name="Lizama B.N."/>
            <person name="Palubinsky A.M."/>
            <person name="Raveendran V.A."/>
            <person name="Moore A.M."/>
            <person name="Federspiel J.D."/>
            <person name="Codreanu S.G."/>
            <person name="Liebler D.C."/>
            <person name="McLaughlin B."/>
        </authorList>
    </citation>
    <scope>DEVELOPMENTAL STAGE</scope>
</reference>
<evidence type="ECO:0000250" key="1">
    <source>
        <dbReference type="UniProtKB" id="P11137"/>
    </source>
</evidence>
<evidence type="ECO:0000250" key="2">
    <source>
        <dbReference type="UniProtKB" id="P20357"/>
    </source>
</evidence>
<evidence type="ECO:0000255" key="3"/>
<evidence type="ECO:0000256" key="4">
    <source>
        <dbReference type="SAM" id="MobiDB-lite"/>
    </source>
</evidence>
<evidence type="ECO:0000269" key="5">
    <source>
    </source>
</evidence>
<evidence type="ECO:0000269" key="6">
    <source>
    </source>
</evidence>
<evidence type="ECO:0000269" key="7">
    <source>
    </source>
</evidence>
<evidence type="ECO:0000269" key="8">
    <source>
    </source>
</evidence>
<evidence type="ECO:0000269" key="9">
    <source>
    </source>
</evidence>
<evidence type="ECO:0000303" key="10">
    <source>
    </source>
</evidence>
<evidence type="ECO:0000303" key="11">
    <source>
    </source>
</evidence>
<evidence type="ECO:0000303" key="12">
    <source>
    </source>
</evidence>
<evidence type="ECO:0000305" key="13"/>
<evidence type="ECO:0007744" key="14">
    <source>
    </source>
</evidence>
<accession>P15146</accession>
<protein>
    <recommendedName>
        <fullName>Microtubule-associated protein 2</fullName>
        <shortName>MAP-2</shortName>
    </recommendedName>
</protein>
<dbReference type="EMBL" id="X51842">
    <property type="protein sequence ID" value="CAA36135.1"/>
    <property type="molecule type" value="mRNA"/>
</dbReference>
<dbReference type="EMBL" id="X17682">
    <property type="protein sequence ID" value="CAA35667.1"/>
    <property type="molecule type" value="mRNA"/>
</dbReference>
<dbReference type="EMBL" id="X71487">
    <property type="protein sequence ID" value="CAA50588.1"/>
    <property type="molecule type" value="mRNA"/>
</dbReference>
<dbReference type="PIR" id="A37981">
    <property type="entry name" value="A37981"/>
</dbReference>
<dbReference type="PIR" id="I55502">
    <property type="entry name" value="S33176"/>
</dbReference>
<dbReference type="RefSeq" id="XP_008765430.1">
    <molecule id="P15146-3"/>
    <property type="nucleotide sequence ID" value="XM_008767208.4"/>
</dbReference>
<dbReference type="PDB" id="8S8O">
    <property type="method" value="NMR"/>
    <property type="chains" value="C=84-111"/>
</dbReference>
<dbReference type="PDB" id="9FUM">
    <property type="method" value="X-ray"/>
    <property type="resolution" value="2.45 A"/>
    <property type="chains" value="E/F=1826-1833"/>
</dbReference>
<dbReference type="PDB" id="9FVL">
    <property type="method" value="X-ray"/>
    <property type="resolution" value="2.08 A"/>
    <property type="chains" value="E/F=1727-1756"/>
</dbReference>
<dbReference type="PDBsum" id="8S8O"/>
<dbReference type="PDBsum" id="9FUM"/>
<dbReference type="PDBsum" id="9FVL"/>
<dbReference type="SASBDB" id="P15146"/>
<dbReference type="SMR" id="P15146"/>
<dbReference type="BioGRID" id="247625">
    <property type="interactions" value="7"/>
</dbReference>
<dbReference type="FunCoup" id="P15146">
    <property type="interactions" value="2265"/>
</dbReference>
<dbReference type="IntAct" id="P15146">
    <property type="interactions" value="6"/>
</dbReference>
<dbReference type="MINT" id="P15146"/>
<dbReference type="STRING" id="10116.ENSRNOP00000042029"/>
<dbReference type="GlyGen" id="P15146">
    <property type="glycosylation" value="4 sites, 1 O-linked glycan (2 sites)"/>
</dbReference>
<dbReference type="iPTMnet" id="P15146"/>
<dbReference type="PhosphoSitePlus" id="P15146"/>
<dbReference type="SwissPalm" id="P15146"/>
<dbReference type="PaxDb" id="10116-ENSRNOP00000050877"/>
<dbReference type="GeneID" id="25595"/>
<dbReference type="UCSC" id="RGD:3044">
    <molecule id="P15146-1"/>
    <property type="organism name" value="rat"/>
</dbReference>
<dbReference type="AGR" id="RGD:3044"/>
<dbReference type="CTD" id="4133"/>
<dbReference type="RGD" id="3044">
    <property type="gene designation" value="Map2"/>
</dbReference>
<dbReference type="eggNOG" id="KOG2418">
    <property type="taxonomic scope" value="Eukaryota"/>
</dbReference>
<dbReference type="InParanoid" id="P15146"/>
<dbReference type="PhylomeDB" id="P15146"/>
<dbReference type="PRO" id="PR:P15146"/>
<dbReference type="Proteomes" id="UP000002494">
    <property type="component" value="Unplaced"/>
</dbReference>
<dbReference type="GO" id="GO:0015629">
    <property type="term" value="C:actin cytoskeleton"/>
    <property type="evidence" value="ECO:0000315"/>
    <property type="project" value="CAFA"/>
</dbReference>
<dbReference type="GO" id="GO:0097440">
    <property type="term" value="C:apical dendrite"/>
    <property type="evidence" value="ECO:0000266"/>
    <property type="project" value="RGD"/>
</dbReference>
<dbReference type="GO" id="GO:0150014">
    <property type="term" value="C:apical distal dendrite"/>
    <property type="evidence" value="ECO:0000314"/>
    <property type="project" value="ARUK-UCL"/>
</dbReference>
<dbReference type="GO" id="GO:0043203">
    <property type="term" value="C:axon hillock"/>
    <property type="evidence" value="ECO:0000314"/>
    <property type="project" value="ARUK-UCL"/>
</dbReference>
<dbReference type="GO" id="GO:0043194">
    <property type="term" value="C:axon initial segment"/>
    <property type="evidence" value="ECO:0000314"/>
    <property type="project" value="ARUK-UCL"/>
</dbReference>
<dbReference type="GO" id="GO:0097441">
    <property type="term" value="C:basal dendrite"/>
    <property type="evidence" value="ECO:0000314"/>
    <property type="project" value="ARUK-UCL"/>
</dbReference>
<dbReference type="GO" id="GO:0097442">
    <property type="term" value="C:CA3 pyramidal cell dendrite"/>
    <property type="evidence" value="ECO:0000266"/>
    <property type="project" value="RGD"/>
</dbReference>
<dbReference type="GO" id="GO:0044297">
    <property type="term" value="C:cell body"/>
    <property type="evidence" value="ECO:0000266"/>
    <property type="project" value="RGD"/>
</dbReference>
<dbReference type="GO" id="GO:0005737">
    <property type="term" value="C:cytoplasm"/>
    <property type="evidence" value="ECO:0000314"/>
    <property type="project" value="ARUK-UCL"/>
</dbReference>
<dbReference type="GO" id="GO:0030425">
    <property type="term" value="C:dendrite"/>
    <property type="evidence" value="ECO:0000314"/>
    <property type="project" value="UniProtKB"/>
</dbReference>
<dbReference type="GO" id="GO:0032839">
    <property type="term" value="C:dendrite cytoplasm"/>
    <property type="evidence" value="ECO:0000314"/>
    <property type="project" value="ARUK-UCL"/>
</dbReference>
<dbReference type="GO" id="GO:0044307">
    <property type="term" value="C:dendritic branch"/>
    <property type="evidence" value="ECO:0000314"/>
    <property type="project" value="ARUK-UCL"/>
</dbReference>
<dbReference type="GO" id="GO:1902737">
    <property type="term" value="C:dendritic filopodium"/>
    <property type="evidence" value="ECO:0000314"/>
    <property type="project" value="ARUK-UCL"/>
</dbReference>
<dbReference type="GO" id="GO:0044294">
    <property type="term" value="C:dendritic growth cone"/>
    <property type="evidence" value="ECO:0000314"/>
    <property type="project" value="ARUK-UCL"/>
</dbReference>
<dbReference type="GO" id="GO:0043198">
    <property type="term" value="C:dendritic shaft"/>
    <property type="evidence" value="ECO:0000314"/>
    <property type="project" value="ARUK-UCL"/>
</dbReference>
<dbReference type="GO" id="GO:0150002">
    <property type="term" value="C:distal dendrite"/>
    <property type="evidence" value="ECO:0000314"/>
    <property type="project" value="ARUK-UCL"/>
</dbReference>
<dbReference type="GO" id="GO:0098978">
    <property type="term" value="C:glutamatergic synapse"/>
    <property type="evidence" value="ECO:0000314"/>
    <property type="project" value="SynGO"/>
</dbReference>
<dbReference type="GO" id="GO:0005874">
    <property type="term" value="C:microtubule"/>
    <property type="evidence" value="ECO:0007669"/>
    <property type="project" value="UniProtKB-KW"/>
</dbReference>
<dbReference type="GO" id="GO:0015630">
    <property type="term" value="C:microtubule cytoskeleton"/>
    <property type="evidence" value="ECO:0000315"/>
    <property type="project" value="CAFA"/>
</dbReference>
<dbReference type="GO" id="GO:0043005">
    <property type="term" value="C:neuron projection"/>
    <property type="evidence" value="ECO:0000314"/>
    <property type="project" value="MGI"/>
</dbReference>
<dbReference type="GO" id="GO:0043025">
    <property type="term" value="C:neuronal cell body"/>
    <property type="evidence" value="ECO:0000314"/>
    <property type="project" value="ARUK-UCL"/>
</dbReference>
<dbReference type="GO" id="GO:0034399">
    <property type="term" value="C:nuclear periphery"/>
    <property type="evidence" value="ECO:0000266"/>
    <property type="project" value="RGD"/>
</dbReference>
<dbReference type="GO" id="GO:0098794">
    <property type="term" value="C:postsynapse"/>
    <property type="evidence" value="ECO:0000314"/>
    <property type="project" value="SynGO"/>
</dbReference>
<dbReference type="GO" id="GO:0014069">
    <property type="term" value="C:postsynaptic density"/>
    <property type="evidence" value="ECO:0000266"/>
    <property type="project" value="RGD"/>
</dbReference>
<dbReference type="GO" id="GO:0150001">
    <property type="term" value="C:primary dendrite"/>
    <property type="evidence" value="ECO:0000314"/>
    <property type="project" value="ARUK-UCL"/>
</dbReference>
<dbReference type="GO" id="GO:0032991">
    <property type="term" value="C:protein-containing complex"/>
    <property type="evidence" value="ECO:0000314"/>
    <property type="project" value="RGD"/>
</dbReference>
<dbReference type="GO" id="GO:1990635">
    <property type="term" value="C:proximal dendrite"/>
    <property type="evidence" value="ECO:0000314"/>
    <property type="project" value="ARUK-UCL"/>
</dbReference>
<dbReference type="GO" id="GO:1990769">
    <property type="term" value="C:proximal neuron projection"/>
    <property type="evidence" value="ECO:0000314"/>
    <property type="project" value="ARUK-UCL"/>
</dbReference>
<dbReference type="GO" id="GO:0032587">
    <property type="term" value="C:ruffle membrane"/>
    <property type="evidence" value="ECO:0000315"/>
    <property type="project" value="CAFA"/>
</dbReference>
<dbReference type="GO" id="GO:0003779">
    <property type="term" value="F:actin binding"/>
    <property type="evidence" value="ECO:0000315"/>
    <property type="project" value="CAFA"/>
</dbReference>
<dbReference type="GO" id="GO:0005516">
    <property type="term" value="F:calmodulin binding"/>
    <property type="evidence" value="ECO:0007669"/>
    <property type="project" value="UniProtKB-KW"/>
</dbReference>
<dbReference type="GO" id="GO:0002162">
    <property type="term" value="F:dystroglycan binding"/>
    <property type="evidence" value="ECO:0000266"/>
    <property type="project" value="RGD"/>
</dbReference>
<dbReference type="GO" id="GO:0008017">
    <property type="term" value="F:microtubule binding"/>
    <property type="evidence" value="ECO:0000315"/>
    <property type="project" value="CAFA"/>
</dbReference>
<dbReference type="GO" id="GO:0019901">
    <property type="term" value="F:protein kinase binding"/>
    <property type="evidence" value="ECO:0000353"/>
    <property type="project" value="ARUK-UCL"/>
</dbReference>
<dbReference type="GO" id="GO:0042169">
    <property type="term" value="F:SH2 domain binding"/>
    <property type="evidence" value="ECO:0000269"/>
    <property type="project" value="DisProt"/>
</dbReference>
<dbReference type="GO" id="GO:0007409">
    <property type="term" value="P:axonogenesis"/>
    <property type="evidence" value="ECO:0000266"/>
    <property type="project" value="RGD"/>
</dbReference>
<dbReference type="GO" id="GO:0021954">
    <property type="term" value="P:central nervous system neuron development"/>
    <property type="evidence" value="ECO:0000266"/>
    <property type="project" value="RGD"/>
</dbReference>
<dbReference type="GO" id="GO:0016358">
    <property type="term" value="P:dendrite development"/>
    <property type="evidence" value="ECO:0000266"/>
    <property type="project" value="RGD"/>
</dbReference>
<dbReference type="GO" id="GO:0048813">
    <property type="term" value="P:dendrite morphogenesis"/>
    <property type="evidence" value="ECO:0000266"/>
    <property type="project" value="RGD"/>
</dbReference>
<dbReference type="GO" id="GO:0030010">
    <property type="term" value="P:establishment of cell polarity"/>
    <property type="evidence" value="ECO:0000266"/>
    <property type="project" value="RGD"/>
</dbReference>
<dbReference type="GO" id="GO:0001578">
    <property type="term" value="P:microtubule bundle formation"/>
    <property type="evidence" value="ECO:0000266"/>
    <property type="project" value="RGD"/>
</dbReference>
<dbReference type="GO" id="GO:0000226">
    <property type="term" value="P:microtubule cytoskeleton organization"/>
    <property type="evidence" value="ECO:0000266"/>
    <property type="project" value="RGD"/>
</dbReference>
<dbReference type="GO" id="GO:0030517">
    <property type="term" value="P:negative regulation of axon extension"/>
    <property type="evidence" value="ECO:0000315"/>
    <property type="project" value="ARUK-UCL"/>
</dbReference>
<dbReference type="GO" id="GO:0007026">
    <property type="term" value="P:negative regulation of microtubule depolymerization"/>
    <property type="evidence" value="ECO:0000315"/>
    <property type="project" value="CAFA"/>
</dbReference>
<dbReference type="GO" id="GO:0031115">
    <property type="term" value="P:negative regulation of microtubule polymerization"/>
    <property type="evidence" value="ECO:0000315"/>
    <property type="project" value="ARUK-UCL"/>
</dbReference>
<dbReference type="GO" id="GO:0031175">
    <property type="term" value="P:neuron projection development"/>
    <property type="evidence" value="ECO:0000266"/>
    <property type="project" value="RGD"/>
</dbReference>
<dbReference type="GO" id="GO:1901953">
    <property type="term" value="P:positive regulation of anterograde dense core granule transport"/>
    <property type="evidence" value="ECO:0000315"/>
    <property type="project" value="ARUK-UCL"/>
</dbReference>
<dbReference type="GO" id="GO:1903744">
    <property type="term" value="P:positive regulation of anterograde synaptic vesicle transport"/>
    <property type="evidence" value="ECO:0000315"/>
    <property type="project" value="ARUK-UCL"/>
</dbReference>
<dbReference type="GO" id="GO:1902996">
    <property type="term" value="P:regulation of neurofibrillary tangle assembly"/>
    <property type="evidence" value="ECO:0000314"/>
    <property type="project" value="ARUK-UCL"/>
</dbReference>
<dbReference type="GO" id="GO:1902513">
    <property type="term" value="P:regulation of organelle transport along microtubule"/>
    <property type="evidence" value="ECO:0000315"/>
    <property type="project" value="ARUK-UCL"/>
</dbReference>
<dbReference type="GO" id="GO:0032880">
    <property type="term" value="P:regulation of protein localization"/>
    <property type="evidence" value="ECO:0000315"/>
    <property type="project" value="ARUK-UCL"/>
</dbReference>
<dbReference type="GO" id="GO:0032355">
    <property type="term" value="P:response to estradiol"/>
    <property type="evidence" value="ECO:0000270"/>
    <property type="project" value="RGD"/>
</dbReference>
<dbReference type="GO" id="GO:0032570">
    <property type="term" value="P:response to progesterone"/>
    <property type="evidence" value="ECO:0000270"/>
    <property type="project" value="RGD"/>
</dbReference>
<dbReference type="DisProt" id="DP00122"/>
<dbReference type="InterPro" id="IPR027324">
    <property type="entry name" value="MAP2/MAP4/Tau"/>
</dbReference>
<dbReference type="InterPro" id="IPR013588">
    <property type="entry name" value="MAP2_projctn"/>
</dbReference>
<dbReference type="InterPro" id="IPR001084">
    <property type="entry name" value="MAP_tubulin-bd_rpt"/>
</dbReference>
<dbReference type="PANTHER" id="PTHR11501">
    <property type="entry name" value="MICROTUBULE-ASSOCIATED PROTEIN"/>
    <property type="match status" value="1"/>
</dbReference>
<dbReference type="PANTHER" id="PTHR11501:SF15">
    <property type="entry name" value="MICROTUBULE-ASSOCIATED PROTEIN 2"/>
    <property type="match status" value="1"/>
</dbReference>
<dbReference type="Pfam" id="PF08377">
    <property type="entry name" value="MAP2_projctn"/>
    <property type="match status" value="1"/>
</dbReference>
<dbReference type="Pfam" id="PF00418">
    <property type="entry name" value="Tubulin-binding"/>
    <property type="match status" value="4"/>
</dbReference>
<dbReference type="PROSITE" id="PS00229">
    <property type="entry name" value="TAU_MAP_1"/>
    <property type="match status" value="3"/>
</dbReference>
<dbReference type="PROSITE" id="PS51491">
    <property type="entry name" value="TAU_MAP_2"/>
    <property type="match status" value="4"/>
</dbReference>
<gene>
    <name type="primary">Map2</name>
    <name type="synonym">Mtap2</name>
</gene>
<name>MTAP2_RAT</name>
<sequence>MADERKDEGKAPHWTSASLTEAAAHPHSPEMKDQGGSGEGLSRSANGFPYREEEEGAFGEHGSQGTYSDTKENGINGELTSADRETAEEVSARIVQVVTAEAVAVLKGEQEKEAQHKDQPAALPLAAEETVNLPPSPPPSPASEQTAALEEDLLTASKMEFPEQQKLPSSFAEPLDKEETEFKMQSKPGEDFEHAALVPQPDTSKTPQDKKDPQDMEGEKSPASPFAQTFGTNLEDIKQITEPSITVPSIGLSAEPLAPKDQKDWFIEMPVESKKDEWGLAAPISPGPLTPMREKDVLEDIPRWEGKQFDSPMPSPFHGGSFTLPLDTVKDERVTEGSQPFAPVFFQSDDKMSLQDTSGSATSKESSKDEEPQKDKADKVADVPVSEATTVLGDVHSPAVEGFVGENISGEEKGTTDQEKKETSTPSVQEPTLTETEPQTKLEETSKVSIEETVAKEEESLKLKDDKAGVIQTSTEQSFSKEDQKGQEQTIEALKQDSFPISLEQAVTDAAMATKTLEKVTSEPEAVSEKREIQGLFEEDIADKSKLEGAGSATVAEVEMPFYEDKSGMSKYFETSALKEDVTRSTGLGSDYYELSDSRGNAQESLDTVSPKNQQDEKELLAKASQPSPPAHEAGYSTLAQSYTSDHPSELPEEPSSPQERMFTIDPKVYGEKRDLHSKNKDDLTLSRSLGLGGRSAIEQRSMSINLPMSCLDSIALGFNFGRGHDLSPLASDILTNTSGSMDEGDDYLPPTTPAVEKIPCFPIESKEEEDKTEQAKVTGGQTTQVETSSESPFPAKEYYKNGTVMAPDLPEMLDLAGTRSRLASVSADAEVARRKSVPSEAVVAESSTGLPPVADDSQPVKPDSQLEDMGYCVFNKYTVPLPSPVQDSENLSGESGSFYEGTDDKVRRDLATDLSLIEVKLAAAGRVKDEFTAEKEASPPSSADKSGLSREFDQDRKANDKLDTVLEKSEEHVDSKEHAKESEEVGDKVELFGLGVTYEQTSAKELITTKETAPERAEKGLSSVPEVAEVETTTKADQGLDVAAKKDDQSPLDIKVSDFGQMASGMSVDAGKTIELKFEVDQQLTLSSEAPQETDSFMGIESSHVKDGAKVSETEVKEKVAKPDLVHQEAVDKEESYESSGEHESLTMESLKPDEGKKETSPETSLIQDEVALKLSVEIPCPPPVSEADSSIDEKAEVQMEFIQLPKEESTETPDIPAIPSDVTQPQPEAVVSEPAEVRGEEEEIEAEGEYDKLLFRSDTLQITDLLVPGSREEFVETCPGEHKGVVESVVTIEDDFITVVQTTTDEGELGSHSVRFAAPVQPEEERRPYPHDEELEVLMAAEAQAEPKDGSPDAPATPEKEEVPFSEYKTETYDDYKDETTIDDSIMDADSLWVDTQDDDRSILTEQLETIPKEERAEKEARRPSLEKHRKEKPFKTGRGRISTPERREVAKKEPSTVSRDEVRRKKAVYKKAELAKESEVQAHSPSRKLILKPAIKYTRPTHLSCVKRKTTATSGESAQAPSAFKQAKDKVTDGITKSPEKRSSLPRPSSILPPRRGVSGDREENSFSLNSSISSARRTTRSEPIRRAGKSGTSTPTTPGSTAITPGTPPSYSSRTPGTPGTPSYPRTPGTPKSGILVPSEKKVAIIRTPPKSPATPKQLRLINQPLPDLKNVKSKIGSTDNIKYQPKGGQVRILNKKMDFSKVQSRCGSKDNIKHSAGGGNVQIVTKKIDLSHVTSKCGSLKNIRHRPGGGRVKIESVKLDFKEKAQAKVGSLDNAHHVPGGGNVKIDSQKLNFREHAKARVDHGAEIITQSPSRSSVASPRRLSNVSSSGSINLLESPQLATLAEDVTAALAKQGL</sequence>
<proteinExistence type="evidence at protein level"/>
<organism>
    <name type="scientific">Rattus norvegicus</name>
    <name type="common">Rat</name>
    <dbReference type="NCBI Taxonomy" id="10116"/>
    <lineage>
        <taxon>Eukaryota</taxon>
        <taxon>Metazoa</taxon>
        <taxon>Chordata</taxon>
        <taxon>Craniata</taxon>
        <taxon>Vertebrata</taxon>
        <taxon>Euteleostomi</taxon>
        <taxon>Mammalia</taxon>
        <taxon>Eutheria</taxon>
        <taxon>Euarchontoglires</taxon>
        <taxon>Glires</taxon>
        <taxon>Rodentia</taxon>
        <taxon>Myomorpha</taxon>
        <taxon>Muroidea</taxon>
        <taxon>Muridae</taxon>
        <taxon>Murinae</taxon>
        <taxon>Rattus</taxon>
    </lineage>
</organism>
<keyword id="KW-0002">3D-structure</keyword>
<keyword id="KW-0025">Alternative splicing</keyword>
<keyword id="KW-0112">Calmodulin-binding</keyword>
<keyword id="KW-0966">Cell projection</keyword>
<keyword id="KW-0963">Cytoplasm</keyword>
<keyword id="KW-0206">Cytoskeleton</keyword>
<keyword id="KW-0493">Microtubule</keyword>
<keyword id="KW-0597">Phosphoprotein</keyword>
<keyword id="KW-1185">Reference proteome</keyword>
<keyword id="KW-0677">Repeat</keyword>
<feature type="chain" id="PRO_0000072749" description="Microtubule-associated protein 2">
    <location>
        <begin position="1"/>
        <end position="1861"/>
    </location>
</feature>
<feature type="repeat" description="Tau/MAP 1">
    <location>
        <begin position="1664"/>
        <end position="1694"/>
    </location>
</feature>
<feature type="repeat" description="Tau/MAP 2">
    <location>
        <begin position="1695"/>
        <end position="1725"/>
    </location>
</feature>
<feature type="repeat" description="Tau/MAP 3">
    <location>
        <begin position="1726"/>
        <end position="1756"/>
    </location>
</feature>
<feature type="repeat" description="Tau/MAP 4">
    <location>
        <begin position="1757"/>
        <end position="1788"/>
    </location>
</feature>
<feature type="region of interest" description="Disordered" evidence="4">
    <location>
        <begin position="1"/>
        <end position="86"/>
    </location>
</feature>
<feature type="region of interest" description="Disordered" evidence="4">
    <location>
        <begin position="109"/>
        <end position="231"/>
    </location>
</feature>
<feature type="region of interest" description="Disordered" evidence="4">
    <location>
        <begin position="305"/>
        <end position="469"/>
    </location>
</feature>
<feature type="region of interest" description="Disordered" evidence="4">
    <location>
        <begin position="575"/>
        <end position="688"/>
    </location>
</feature>
<feature type="region of interest" description="Interaction with KNDC1" evidence="2">
    <location>
        <begin position="704"/>
        <end position="747"/>
    </location>
</feature>
<feature type="region of interest" description="Disordered" evidence="4">
    <location>
        <begin position="766"/>
        <end position="797"/>
    </location>
</feature>
<feature type="region of interest" description="Disordered" evidence="4">
    <location>
        <begin position="826"/>
        <end position="866"/>
    </location>
</feature>
<feature type="region of interest" description="Disordered" evidence="4">
    <location>
        <begin position="884"/>
        <end position="903"/>
    </location>
</feature>
<feature type="region of interest" description="Disordered" evidence="4">
    <location>
        <begin position="929"/>
        <end position="987"/>
    </location>
</feature>
<feature type="region of interest" description="Disordered" evidence="4">
    <location>
        <begin position="1006"/>
        <end position="1026"/>
    </location>
</feature>
<feature type="region of interest" description="Disordered" evidence="4">
    <location>
        <begin position="1087"/>
        <end position="1170"/>
    </location>
</feature>
<feature type="region of interest" description="Disordered" evidence="4">
    <location>
        <begin position="1207"/>
        <end position="1247"/>
    </location>
</feature>
<feature type="region of interest" description="Disordered" evidence="4">
    <location>
        <begin position="1343"/>
        <end position="1384"/>
    </location>
</feature>
<feature type="region of interest" description="Disordered" evidence="4">
    <location>
        <begin position="1406"/>
        <end position="1643"/>
    </location>
</feature>
<feature type="region of interest" description="Calmodulin-binding" evidence="3">
    <location>
        <begin position="1454"/>
        <end position="1474"/>
    </location>
</feature>
<feature type="region of interest" description="Disordered" evidence="4">
    <location>
        <begin position="1816"/>
        <end position="1835"/>
    </location>
</feature>
<feature type="compositionally biased region" description="Basic and acidic residues" evidence="4">
    <location>
        <begin position="1"/>
        <end position="11"/>
    </location>
</feature>
<feature type="compositionally biased region" description="Basic and acidic residues" evidence="4">
    <location>
        <begin position="109"/>
        <end position="119"/>
    </location>
</feature>
<feature type="compositionally biased region" description="Basic and acidic residues" evidence="4">
    <location>
        <begin position="174"/>
        <end position="194"/>
    </location>
</feature>
<feature type="compositionally biased region" description="Basic and acidic residues" evidence="4">
    <location>
        <begin position="207"/>
        <end position="220"/>
    </location>
</feature>
<feature type="compositionally biased region" description="Polar residues" evidence="4">
    <location>
        <begin position="354"/>
        <end position="364"/>
    </location>
</feature>
<feature type="compositionally biased region" description="Basic and acidic residues" evidence="4">
    <location>
        <begin position="365"/>
        <end position="381"/>
    </location>
</feature>
<feature type="compositionally biased region" description="Basic and acidic residues" evidence="4">
    <location>
        <begin position="410"/>
        <end position="423"/>
    </location>
</feature>
<feature type="compositionally biased region" description="Basic and acidic residues" evidence="4">
    <location>
        <begin position="438"/>
        <end position="468"/>
    </location>
</feature>
<feature type="compositionally biased region" description="Polar residues" evidence="4">
    <location>
        <begin position="598"/>
        <end position="613"/>
    </location>
</feature>
<feature type="compositionally biased region" description="Basic and acidic residues" evidence="4">
    <location>
        <begin position="669"/>
        <end position="685"/>
    </location>
</feature>
<feature type="compositionally biased region" description="Basic and acidic residues" evidence="4">
    <location>
        <begin position="766"/>
        <end position="775"/>
    </location>
</feature>
<feature type="compositionally biased region" description="Polar residues" evidence="4">
    <location>
        <begin position="780"/>
        <end position="792"/>
    </location>
</feature>
<feature type="compositionally biased region" description="Low complexity" evidence="4">
    <location>
        <begin position="839"/>
        <end position="848"/>
    </location>
</feature>
<feature type="compositionally biased region" description="Polar residues" evidence="4">
    <location>
        <begin position="886"/>
        <end position="896"/>
    </location>
</feature>
<feature type="compositionally biased region" description="Basic and acidic residues" evidence="4">
    <location>
        <begin position="929"/>
        <end position="938"/>
    </location>
</feature>
<feature type="compositionally biased region" description="Basic and acidic residues" evidence="4">
    <location>
        <begin position="948"/>
        <end position="987"/>
    </location>
</feature>
<feature type="compositionally biased region" description="Polar residues" evidence="4">
    <location>
        <begin position="1087"/>
        <end position="1096"/>
    </location>
</feature>
<feature type="compositionally biased region" description="Basic and acidic residues" evidence="4">
    <location>
        <begin position="1104"/>
        <end position="1162"/>
    </location>
</feature>
<feature type="compositionally biased region" description="Basic and acidic residues" evidence="4">
    <location>
        <begin position="1360"/>
        <end position="1382"/>
    </location>
</feature>
<feature type="compositionally biased region" description="Basic and acidic residues" evidence="4">
    <location>
        <begin position="1413"/>
        <end position="1431"/>
    </location>
</feature>
<feature type="compositionally biased region" description="Basic residues" evidence="4">
    <location>
        <begin position="1432"/>
        <end position="1441"/>
    </location>
</feature>
<feature type="compositionally biased region" description="Basic and acidic residues" evidence="4">
    <location>
        <begin position="1446"/>
        <end position="1466"/>
    </location>
</feature>
<feature type="compositionally biased region" description="Basic and acidic residues" evidence="4">
    <location>
        <begin position="1473"/>
        <end position="1483"/>
    </location>
</feature>
<feature type="compositionally biased region" description="Polar residues" evidence="4">
    <location>
        <begin position="1514"/>
        <end position="1523"/>
    </location>
</feature>
<feature type="compositionally biased region" description="Basic and acidic residues" evidence="4">
    <location>
        <begin position="1529"/>
        <end position="1546"/>
    </location>
</feature>
<feature type="compositionally biased region" description="Low complexity" evidence="4">
    <location>
        <begin position="1548"/>
        <end position="1559"/>
    </location>
</feature>
<feature type="compositionally biased region" description="Low complexity" evidence="4">
    <location>
        <begin position="1569"/>
        <end position="1580"/>
    </location>
</feature>
<feature type="compositionally biased region" description="Low complexity" evidence="4">
    <location>
        <begin position="1593"/>
        <end position="1609"/>
    </location>
</feature>
<feature type="compositionally biased region" description="Polar residues" evidence="4">
    <location>
        <begin position="1615"/>
        <end position="1625"/>
    </location>
</feature>
<feature type="compositionally biased region" description="Low complexity" evidence="4">
    <location>
        <begin position="1816"/>
        <end position="1829"/>
    </location>
</feature>
<feature type="modified residue" description="Phosphoserine" evidence="2">
    <location>
        <position position="28"/>
    </location>
</feature>
<feature type="modified residue" description="Phosphoserine" evidence="14">
    <location>
        <position position="37"/>
    </location>
</feature>
<feature type="modified residue" description="Phosphoserine" evidence="14">
    <location>
        <position position="136"/>
    </location>
</feature>
<feature type="modified residue" description="Phosphoserine" evidence="14">
    <location>
        <position position="140"/>
    </location>
</feature>
<feature type="modified residue" description="Phosphoserine" evidence="2">
    <location>
        <position position="143"/>
    </location>
</feature>
<feature type="modified residue" description="Phosphoserine" evidence="14">
    <location>
        <position position="221"/>
    </location>
</feature>
<feature type="modified residue" description="Phosphoserine" evidence="14">
    <location>
        <position position="224"/>
    </location>
</feature>
<feature type="modified residue" description="Phosphoserine" evidence="2">
    <location>
        <position position="285"/>
    </location>
</feature>
<feature type="modified residue" description="Phosphoserine" evidence="14">
    <location>
        <position position="348"/>
    </location>
</feature>
<feature type="modified residue" description="Phosphoserine" evidence="2">
    <location>
        <position position="478"/>
    </location>
</feature>
<feature type="modified residue" description="Phosphoserine" evidence="14">
    <location>
        <position position="498"/>
    </location>
</feature>
<feature type="modified residue" description="Phosphoserine" evidence="14">
    <location>
        <position position="522"/>
    </location>
</feature>
<feature type="modified residue" description="Phosphoserine" evidence="2">
    <location>
        <position position="552"/>
    </location>
</feature>
<feature type="modified residue" description="Phosphoserine" evidence="2">
    <location>
        <position position="598"/>
    </location>
</feature>
<feature type="modified residue" description="Phosphoserine" evidence="2">
    <location>
        <position position="605"/>
    </location>
</feature>
<feature type="modified residue" description="Phosphoserine" evidence="14">
    <location>
        <position position="610"/>
    </location>
</feature>
<feature type="modified residue" description="Phosphoserine" evidence="14">
    <location>
        <position position="628"/>
    </location>
</feature>
<feature type="modified residue" description="Phosphoserine" evidence="2">
    <location>
        <position position="728"/>
    </location>
</feature>
<feature type="modified residue" description="Phosphoserine" evidence="2">
    <location>
        <position position="732"/>
    </location>
</feature>
<feature type="modified residue" description="Phosphothreonine" evidence="2">
    <location>
        <position position="736"/>
    </location>
</feature>
<feature type="modified residue" description="Phosphoserine" evidence="2">
    <location>
        <position position="739"/>
    </location>
</feature>
<feature type="modified residue" description="Phosphoserine" evidence="14">
    <location>
        <position position="741"/>
    </location>
</feature>
<feature type="modified residue" description="Phosphotyrosine" evidence="2">
    <location>
        <position position="748"/>
    </location>
</feature>
<feature type="modified residue" description="Phosphoserine" evidence="2">
    <location>
        <position position="825"/>
    </location>
</feature>
<feature type="modified residue" description="Phosphoserine" evidence="14">
    <location>
        <position position="884"/>
    </location>
</feature>
<feature type="modified residue" description="Phosphoserine" evidence="14">
    <location>
        <position position="893"/>
    </location>
</feature>
<feature type="modified residue" description="Phosphoserine" evidence="14">
    <location>
        <position position="939"/>
    </location>
</feature>
<feature type="modified residue" description="Phosphoserine" evidence="14">
    <location>
        <position position="1051"/>
    </location>
</feature>
<feature type="modified residue" description="Phosphoserine" evidence="14">
    <location>
        <position position="1140"/>
    </location>
</feature>
<feature type="modified residue" description="Phosphoserine" evidence="14">
    <location>
        <position position="1141"/>
    </location>
</feature>
<feature type="modified residue" description="Phosphoserine" evidence="2">
    <location>
        <position position="1146"/>
    </location>
</feature>
<feature type="modified residue" description="Phosphothreonine" evidence="14">
    <location>
        <position position="1161"/>
    </location>
</feature>
<feature type="modified residue" description="Phosphoserine" evidence="14">
    <location>
        <position position="1162"/>
    </location>
</feature>
<feature type="modified residue" description="Phosphoserine" evidence="2">
    <location>
        <position position="1166"/>
    </location>
</feature>
<feature type="modified residue" description="Phosphoserine" evidence="14">
    <location>
        <position position="1353"/>
    </location>
</feature>
<feature type="modified residue" description="Phosphothreonine" evidence="14">
    <location>
        <position position="1359"/>
    </location>
</feature>
<feature type="modified residue" description="Phosphoserine" evidence="14">
    <location>
        <position position="1541"/>
    </location>
</feature>
<feature type="modified residue" description="Phosphoserine" evidence="2">
    <location>
        <position position="1562"/>
    </location>
</feature>
<feature type="modified residue" description="Phosphoserine" evidence="2">
    <location>
        <position position="1594"/>
    </location>
</feature>
<feature type="modified residue" description="Phosphothreonine" evidence="2">
    <location>
        <position position="1608"/>
    </location>
</feature>
<feature type="modified residue" description="Phosphothreonine" evidence="14">
    <location>
        <position position="1611"/>
    </location>
</feature>
<feature type="modified residue" description="Phosphothreonine" evidence="14">
    <location>
        <position position="1622"/>
    </location>
</feature>
<feature type="modified residue" description="Phosphothreonine" evidence="14">
    <location>
        <position position="1625"/>
    </location>
</feature>
<feature type="modified residue" description="Phosphothreonine" evidence="14">
    <location>
        <position position="1652"/>
    </location>
</feature>
<feature type="modified residue" description="Phosphoserine" evidence="14">
    <location>
        <position position="1656"/>
    </location>
</feature>
<feature type="modified residue" description="Phosphoserine; by MARK1" evidence="9">
    <location>
        <position position="1682"/>
    </location>
</feature>
<feature type="modified residue" description="Phosphoserine" evidence="14">
    <location>
        <position position="1816"/>
    </location>
</feature>
<feature type="modified residue" description="Phosphoserine" evidence="2">
    <location>
        <position position="1821"/>
    </location>
</feature>
<feature type="modified residue" description="Phosphoserine" evidence="14">
    <location>
        <position position="1824"/>
    </location>
</feature>
<feature type="modified residue" description="Phosphoserine" evidence="14">
    <location>
        <position position="1829"/>
    </location>
</feature>
<feature type="modified residue" description="Phosphoserine" evidence="14">
    <location>
        <position position="1842"/>
    </location>
</feature>
<feature type="splice variant" id="VSP_003198" description="In isoform 3 and isoform 4." evidence="11">
    <location>
        <begin position="152"/>
        <end position="1514"/>
    </location>
</feature>
<feature type="splice variant" id="VSP_003199" description="In isoform 2 and isoform 3." evidence="10 11 12">
    <location>
        <begin position="1695"/>
        <end position="1725"/>
    </location>
</feature>
<feature type="modified residue" description="Phosphoserine" evidence="5">
    <location sequence="P15146-3">
        <position position="319"/>
    </location>
</feature>
<feature type="modified residue" description="Phosphoserine" evidence="5">
    <location sequence="P15146-3">
        <position position="350"/>
    </location>
</feature>
<feature type="modified residue" description="Phosphoserine" evidence="5">
    <location sequence="P15146-3">
        <position position="382"/>
    </location>
</feature>
<comment type="function">
    <text>The exact function of MAP2 is unknown but MAPs may stabilize the microtubules against depolymerization. They also seem to have a stiffening effect on microtubules.</text>
</comment>
<comment type="subunit">
    <text evidence="1 2">Interacts with KNDC1 (via KIND2); the interaction enhances MAP2 phosphorylation and localizes KNDC1 to dendrites. Interacts with DPYSL5 (By similarity).</text>
</comment>
<comment type="subcellular location">
    <subcellularLocation>
        <location evidence="13">Cytoplasm</location>
        <location evidence="13">Cytoskeleton</location>
    </subcellularLocation>
    <subcellularLocation>
        <location evidence="2">Cell projection</location>
        <location evidence="2">Dendrite</location>
    </subcellularLocation>
</comment>
<comment type="alternative products">
    <event type="alternative splicing"/>
    <isoform>
        <id>P15146-1</id>
        <name>1</name>
        <name>MAP2x</name>
        <sequence type="displayed"/>
    </isoform>
    <isoform>
        <id>P15146-2</id>
        <name>2</name>
        <name>MAP2b</name>
        <sequence type="described" ref="VSP_003199"/>
    </isoform>
    <isoform>
        <id>P15146-3</id>
        <name>3</name>
        <name>MAP2c</name>
        <sequence type="described" ref="VSP_003198 VSP_003199"/>
    </isoform>
    <isoform>
        <id>P15146-4</id>
        <name>4</name>
        <name>MAP2d</name>
        <sequence type="described" ref="VSP_003198"/>
    </isoform>
    <text>Additional isoforms seem to exist.</text>
</comment>
<comment type="tissue specificity">
    <molecule>Isoform 2</molecule>
    <text evidence="6">Expressed in the liver.</text>
</comment>
<comment type="tissue specificity">
    <molecule>Isoform 3</molecule>
    <text evidence="7">Expressed in the entorhinal cortex and hippocampal neuronal cell bodies.</text>
</comment>
<comment type="developmental stage">
    <text evidence="8">Expressed in neurons at 18.5 dpc (at protein level).</text>
</comment>
<comment type="developmental stage">
    <molecule>Isoform 3</molecule>
    <text evidence="6 7">Expressed in the brain at postnatal day 6 (PubMed:2770869). Expressed in the brain at postnatal day 7 (PubMed:2174050).</text>
</comment>
<comment type="PTM">
    <text evidence="2 5 9">Phosphorylated at serine residues in K-X-G-S motifs by MAP/microtubule affinity-regulating kinase (MARK1 or MARK2), causing detachment from microtubules, and their disassembly. Isoform 3/MAP2c is probably phosphorylated by PKA at Ser-319, Ser-350 and Ser-382 and by FYN at Tyr-67. The interaction with KNDC1 enhances MAP2 threonine phosphorylation (By similarity).</text>
</comment>